<proteinExistence type="inferred from homology"/>
<keyword id="KW-0028">Amino-acid biosynthesis</keyword>
<keyword id="KW-0479">Metal-binding</keyword>
<keyword id="KW-0486">Methionine biosynthesis</keyword>
<keyword id="KW-0489">Methyltransferase</keyword>
<keyword id="KW-1185">Reference proteome</keyword>
<keyword id="KW-0677">Repeat</keyword>
<keyword id="KW-0808">Transferase</keyword>
<keyword id="KW-0862">Zinc</keyword>
<feature type="chain" id="PRO_1000017227" description="5-methyltetrahydropteroyltriglutamate--homocysteine methyltransferase">
    <location>
        <begin position="1"/>
        <end position="766"/>
    </location>
</feature>
<feature type="active site" description="Proton donor" evidence="1">
    <location>
        <position position="705"/>
    </location>
</feature>
<feature type="binding site" evidence="1">
    <location>
        <begin position="16"/>
        <end position="19"/>
    </location>
    <ligand>
        <name>5-methyltetrahydropteroyltri-L-glutamate</name>
        <dbReference type="ChEBI" id="CHEBI:58207"/>
    </ligand>
</feature>
<feature type="binding site" evidence="1">
    <location>
        <position position="117"/>
    </location>
    <ligand>
        <name>5-methyltetrahydropteroyltri-L-glutamate</name>
        <dbReference type="ChEBI" id="CHEBI:58207"/>
    </ligand>
</feature>
<feature type="binding site" evidence="1">
    <location>
        <begin position="442"/>
        <end position="444"/>
    </location>
    <ligand>
        <name>L-homocysteine</name>
        <dbReference type="ChEBI" id="CHEBI:58199"/>
    </ligand>
</feature>
<feature type="binding site" evidence="1">
    <location>
        <begin position="442"/>
        <end position="444"/>
    </location>
    <ligand>
        <name>L-methionine</name>
        <dbReference type="ChEBI" id="CHEBI:57844"/>
    </ligand>
</feature>
<feature type="binding site" evidence="1">
    <location>
        <position position="495"/>
    </location>
    <ligand>
        <name>L-homocysteine</name>
        <dbReference type="ChEBI" id="CHEBI:58199"/>
    </ligand>
</feature>
<feature type="binding site" evidence="1">
    <location>
        <position position="495"/>
    </location>
    <ligand>
        <name>L-methionine</name>
        <dbReference type="ChEBI" id="CHEBI:57844"/>
    </ligand>
</feature>
<feature type="binding site" evidence="1">
    <location>
        <begin position="526"/>
        <end position="527"/>
    </location>
    <ligand>
        <name>5-methyltetrahydropteroyltri-L-glutamate</name>
        <dbReference type="ChEBI" id="CHEBI:58207"/>
    </ligand>
</feature>
<feature type="binding site" evidence="1">
    <location>
        <position position="572"/>
    </location>
    <ligand>
        <name>5-methyltetrahydropteroyltri-L-glutamate</name>
        <dbReference type="ChEBI" id="CHEBI:58207"/>
    </ligand>
</feature>
<feature type="binding site" evidence="1">
    <location>
        <position position="610"/>
    </location>
    <ligand>
        <name>L-homocysteine</name>
        <dbReference type="ChEBI" id="CHEBI:58199"/>
    </ligand>
</feature>
<feature type="binding site" evidence="1">
    <location>
        <position position="610"/>
    </location>
    <ligand>
        <name>L-methionine</name>
        <dbReference type="ChEBI" id="CHEBI:57844"/>
    </ligand>
</feature>
<feature type="binding site" evidence="1">
    <location>
        <position position="616"/>
    </location>
    <ligand>
        <name>5-methyltetrahydropteroyltri-L-glutamate</name>
        <dbReference type="ChEBI" id="CHEBI:58207"/>
    </ligand>
</feature>
<feature type="binding site" evidence="1">
    <location>
        <position position="652"/>
    </location>
    <ligand>
        <name>Zn(2+)</name>
        <dbReference type="ChEBI" id="CHEBI:29105"/>
        <note>catalytic</note>
    </ligand>
</feature>
<feature type="binding site" evidence="1">
    <location>
        <position position="654"/>
    </location>
    <ligand>
        <name>Zn(2+)</name>
        <dbReference type="ChEBI" id="CHEBI:29105"/>
        <note>catalytic</note>
    </ligand>
</feature>
<feature type="binding site" evidence="1">
    <location>
        <position position="676"/>
    </location>
    <ligand>
        <name>Zn(2+)</name>
        <dbReference type="ChEBI" id="CHEBI:29105"/>
        <note>catalytic</note>
    </ligand>
</feature>
<feature type="binding site" evidence="1">
    <location>
        <position position="737"/>
    </location>
    <ligand>
        <name>Zn(2+)</name>
        <dbReference type="ChEBI" id="CHEBI:29105"/>
        <note>catalytic</note>
    </ligand>
</feature>
<comment type="function">
    <text evidence="1">Catalyzes the transfer of a methyl group from 5-methyltetrahydrofolate to homocysteine resulting in methionine formation.</text>
</comment>
<comment type="catalytic activity">
    <reaction evidence="1">
        <text>5-methyltetrahydropteroyltri-L-glutamate + L-homocysteine = tetrahydropteroyltri-L-glutamate + L-methionine</text>
        <dbReference type="Rhea" id="RHEA:21196"/>
        <dbReference type="ChEBI" id="CHEBI:57844"/>
        <dbReference type="ChEBI" id="CHEBI:58140"/>
        <dbReference type="ChEBI" id="CHEBI:58199"/>
        <dbReference type="ChEBI" id="CHEBI:58207"/>
        <dbReference type="EC" id="2.1.1.14"/>
    </reaction>
</comment>
<comment type="cofactor">
    <cofactor evidence="1">
        <name>Zn(2+)</name>
        <dbReference type="ChEBI" id="CHEBI:29105"/>
    </cofactor>
    <text evidence="1">Binds 1 zinc ion per subunit.</text>
</comment>
<comment type="pathway">
    <text evidence="1">Amino-acid biosynthesis; L-methionine biosynthesis via de novo pathway; L-methionine from L-homocysteine (MetE route): step 1/1.</text>
</comment>
<comment type="similarity">
    <text evidence="1">Belongs to the vitamin-B12 independent methionine synthase family.</text>
</comment>
<evidence type="ECO:0000255" key="1">
    <source>
        <dbReference type="HAMAP-Rule" id="MF_00172"/>
    </source>
</evidence>
<organism>
    <name type="scientific">Bordetella avium (strain 197N)</name>
    <dbReference type="NCBI Taxonomy" id="360910"/>
    <lineage>
        <taxon>Bacteria</taxon>
        <taxon>Pseudomonadati</taxon>
        <taxon>Pseudomonadota</taxon>
        <taxon>Betaproteobacteria</taxon>
        <taxon>Burkholderiales</taxon>
        <taxon>Alcaligenaceae</taxon>
        <taxon>Bordetella</taxon>
    </lineage>
</organism>
<accession>Q2KYF3</accession>
<dbReference type="EC" id="2.1.1.14" evidence="1"/>
<dbReference type="EMBL" id="AM167904">
    <property type="protein sequence ID" value="CAJ49916.1"/>
    <property type="molecule type" value="Genomic_DNA"/>
</dbReference>
<dbReference type="RefSeq" id="WP_012417967.1">
    <property type="nucleotide sequence ID" value="NC_010645.1"/>
</dbReference>
<dbReference type="SMR" id="Q2KYF3"/>
<dbReference type="STRING" id="360910.BAV2306"/>
<dbReference type="KEGG" id="bav:BAV2306"/>
<dbReference type="eggNOG" id="COG0620">
    <property type="taxonomic scope" value="Bacteria"/>
</dbReference>
<dbReference type="HOGENOM" id="CLU_013175_0_0_4"/>
<dbReference type="OrthoDB" id="244285at2"/>
<dbReference type="UniPathway" id="UPA00051">
    <property type="reaction ID" value="UER00082"/>
</dbReference>
<dbReference type="Proteomes" id="UP000001977">
    <property type="component" value="Chromosome"/>
</dbReference>
<dbReference type="GO" id="GO:0003871">
    <property type="term" value="F:5-methyltetrahydropteroyltriglutamate-homocysteine S-methyltransferase activity"/>
    <property type="evidence" value="ECO:0007669"/>
    <property type="project" value="UniProtKB-UniRule"/>
</dbReference>
<dbReference type="GO" id="GO:0008270">
    <property type="term" value="F:zinc ion binding"/>
    <property type="evidence" value="ECO:0007669"/>
    <property type="project" value="InterPro"/>
</dbReference>
<dbReference type="GO" id="GO:0009086">
    <property type="term" value="P:methionine biosynthetic process"/>
    <property type="evidence" value="ECO:0007669"/>
    <property type="project" value="UniProtKB-UniRule"/>
</dbReference>
<dbReference type="GO" id="GO:0032259">
    <property type="term" value="P:methylation"/>
    <property type="evidence" value="ECO:0007669"/>
    <property type="project" value="UniProtKB-KW"/>
</dbReference>
<dbReference type="CDD" id="cd03311">
    <property type="entry name" value="CIMS_C_terminal_like"/>
    <property type="match status" value="1"/>
</dbReference>
<dbReference type="CDD" id="cd03312">
    <property type="entry name" value="CIMS_N_terminal_like"/>
    <property type="match status" value="1"/>
</dbReference>
<dbReference type="FunFam" id="3.20.20.210:FF:000002">
    <property type="entry name" value="5-methyltetrahydropteroyltriglutamate--homocysteine methyltransferase"/>
    <property type="match status" value="1"/>
</dbReference>
<dbReference type="FunFam" id="3.20.20.210:FF:000003">
    <property type="entry name" value="5-methyltetrahydropteroyltriglutamate--homocysteine methyltransferase"/>
    <property type="match status" value="1"/>
</dbReference>
<dbReference type="Gene3D" id="3.20.20.210">
    <property type="match status" value="2"/>
</dbReference>
<dbReference type="HAMAP" id="MF_00172">
    <property type="entry name" value="Meth_synth"/>
    <property type="match status" value="1"/>
</dbReference>
<dbReference type="InterPro" id="IPR013215">
    <property type="entry name" value="Cbl-indep_Met_Synth_N"/>
</dbReference>
<dbReference type="InterPro" id="IPR006276">
    <property type="entry name" value="Cobalamin-indep_Met_synthase"/>
</dbReference>
<dbReference type="InterPro" id="IPR002629">
    <property type="entry name" value="Met_Synth_C/arc"/>
</dbReference>
<dbReference type="InterPro" id="IPR038071">
    <property type="entry name" value="UROD/MetE-like_sf"/>
</dbReference>
<dbReference type="NCBIfam" id="TIGR01371">
    <property type="entry name" value="met_syn_B12ind"/>
    <property type="match status" value="1"/>
</dbReference>
<dbReference type="NCBIfam" id="NF003556">
    <property type="entry name" value="PRK05222.1"/>
    <property type="match status" value="1"/>
</dbReference>
<dbReference type="PANTHER" id="PTHR30519">
    <property type="entry name" value="5-METHYLTETRAHYDROPTEROYLTRIGLUTAMATE--HOMOCYSTEINE METHYLTRANSFERASE"/>
    <property type="match status" value="1"/>
</dbReference>
<dbReference type="Pfam" id="PF08267">
    <property type="entry name" value="Meth_synt_1"/>
    <property type="match status" value="1"/>
</dbReference>
<dbReference type="Pfam" id="PF01717">
    <property type="entry name" value="Meth_synt_2"/>
    <property type="match status" value="1"/>
</dbReference>
<dbReference type="PIRSF" id="PIRSF000382">
    <property type="entry name" value="MeTrfase_B12_ind"/>
    <property type="match status" value="1"/>
</dbReference>
<dbReference type="SUPFAM" id="SSF51726">
    <property type="entry name" value="UROD/MetE-like"/>
    <property type="match status" value="2"/>
</dbReference>
<protein>
    <recommendedName>
        <fullName evidence="1">5-methyltetrahydropteroyltriglutamate--homocysteine methyltransferase</fullName>
        <ecNumber evidence="1">2.1.1.14</ecNumber>
    </recommendedName>
    <alternativeName>
        <fullName evidence="1">Cobalamin-independent methionine synthase</fullName>
    </alternativeName>
    <alternativeName>
        <fullName evidence="1">Methionine synthase, vitamin-B12 independent isozyme</fullName>
    </alternativeName>
</protein>
<reference key="1">
    <citation type="journal article" date="2006" name="J. Bacteriol.">
        <title>Comparison of the genome sequence of the poultry pathogen Bordetella avium with those of B. bronchiseptica, B. pertussis, and B. parapertussis reveals extensive diversity in surface structures associated with host interaction.</title>
        <authorList>
            <person name="Sebaihia M."/>
            <person name="Preston A."/>
            <person name="Maskell D.J."/>
            <person name="Kuzmiak H."/>
            <person name="Connell T.D."/>
            <person name="King N.D."/>
            <person name="Orndorff P.E."/>
            <person name="Miyamoto D.M."/>
            <person name="Thomson N.R."/>
            <person name="Harris D."/>
            <person name="Goble A."/>
            <person name="Lord A."/>
            <person name="Murphy L."/>
            <person name="Quail M.A."/>
            <person name="Rutter S."/>
            <person name="Squares R."/>
            <person name="Squares S."/>
            <person name="Woodward J."/>
            <person name="Parkhill J."/>
            <person name="Temple L.M."/>
        </authorList>
    </citation>
    <scope>NUCLEOTIDE SEQUENCE [LARGE SCALE GENOMIC DNA]</scope>
    <source>
        <strain>197N</strain>
    </source>
</reference>
<gene>
    <name evidence="1" type="primary">metE</name>
    <name type="ordered locus">BAV2306</name>
</gene>
<name>METE_BORA1</name>
<sequence>MTITHNLGFPRIGAQRELKRAVEAYWAGKQTADELLATGRALRAAHWRRQADSGLRFVPVGDFAWYDHILEWTTLLGAVPARFAQPETQAVSLDTLFRMGRGRAPSGKPAAACEMTKWFDTNYHYIVPELVPGQTYRIAREDLFEQVREAQALGYAVKPVIPGPLTWLYLGKGDAFQQGASDEDKLKLLANLLPVYQQVLKRLADQGVEWVQIDEPILALDLPAAWRDAFGLAYAQLAGSPVKVLLATYFDGLKDNLSTVTKLPVAGLHVDLVRAPEQLDDVVEALHADQVLSAGVINGRNVWRTDLDQALRKLEPVARQLGDRLWLAPSCSLLHVPVDLLAETELDAELKSWLSFASQKLDELSLLGRALDGDSSQAVQEGLAAQRAALAARRSSPRIHNPAVGRRMAASEQVSRDRAPFAERIRQQQARLNLPPFPTTTIGSFPQTAEIRGLRRDWKSGALSDSTYEALIRKEIEAVIRFQEKVGLDVLVHGEPERNDMVEYFGELLAGFAFTKNGWVQSYGSRCVKPPIIFGDVARPAPMTVGWSSYAQSLTDKPVKGMLTGPVTILQWSFVRDDQPREATCRQLALALRDEVLDLEKAGVKVIQIDEPAIREGLPLRRADWQAYLDWAVDCFRLSTAGVADDTQIHTHMCYSEFNDIIESIAAMDADVITIETSRSNMELLKAFEDFHYPNDIGPGVYDIHSPNVPDVDWMVGLMQKAGANLSKERLWVNPDCGLKTRAWPETEAALISMVQAARTLRQATS</sequence>